<comment type="function">
    <text evidence="1">Catalyzes the decarboxylation of orotidine 5'-monophosphate (OMP) to uridine 5'-monophosphate (UMP).</text>
</comment>
<comment type="catalytic activity">
    <reaction evidence="1">
        <text>orotidine 5'-phosphate + H(+) = UMP + CO2</text>
        <dbReference type="Rhea" id="RHEA:11596"/>
        <dbReference type="ChEBI" id="CHEBI:15378"/>
        <dbReference type="ChEBI" id="CHEBI:16526"/>
        <dbReference type="ChEBI" id="CHEBI:57538"/>
        <dbReference type="ChEBI" id="CHEBI:57865"/>
        <dbReference type="EC" id="4.1.1.23"/>
    </reaction>
</comment>
<comment type="pathway">
    <text evidence="1">Pyrimidine metabolism; UMP biosynthesis via de novo pathway; UMP from orotate: step 2/2.</text>
</comment>
<comment type="subunit">
    <text evidence="1">Homodimer.</text>
</comment>
<comment type="similarity">
    <text evidence="1">Belongs to the OMP decarboxylase family. Type 1 subfamily.</text>
</comment>
<proteinExistence type="inferred from homology"/>
<name>PYRF_XYLF2</name>
<gene>
    <name evidence="1" type="primary">pyrF</name>
    <name type="ordered locus">XfasM23_0025</name>
</gene>
<feature type="chain" id="PRO_1000138572" description="Orotidine 5'-phosphate decarboxylase">
    <location>
        <begin position="1"/>
        <end position="244"/>
    </location>
</feature>
<feature type="active site" description="Proton donor" evidence="1">
    <location>
        <position position="72"/>
    </location>
</feature>
<feature type="binding site" evidence="1">
    <location>
        <position position="20"/>
    </location>
    <ligand>
        <name>substrate</name>
    </ligand>
</feature>
<feature type="binding site" evidence="1">
    <location>
        <position position="42"/>
    </location>
    <ligand>
        <name>substrate</name>
    </ligand>
</feature>
<feature type="binding site" evidence="1">
    <location>
        <begin position="70"/>
        <end position="79"/>
    </location>
    <ligand>
        <name>substrate</name>
    </ligand>
</feature>
<feature type="binding site" evidence="1">
    <location>
        <position position="125"/>
    </location>
    <ligand>
        <name>substrate</name>
    </ligand>
</feature>
<feature type="binding site" evidence="1">
    <location>
        <position position="186"/>
    </location>
    <ligand>
        <name>substrate</name>
    </ligand>
</feature>
<feature type="binding site" evidence="1">
    <location>
        <position position="195"/>
    </location>
    <ligand>
        <name>substrate</name>
    </ligand>
</feature>
<feature type="binding site" evidence="1">
    <location>
        <position position="215"/>
    </location>
    <ligand>
        <name>substrate</name>
    </ligand>
</feature>
<feature type="binding site" evidence="1">
    <location>
        <position position="216"/>
    </location>
    <ligand>
        <name>substrate</name>
    </ligand>
</feature>
<protein>
    <recommendedName>
        <fullName evidence="1">Orotidine 5'-phosphate decarboxylase</fullName>
        <ecNumber evidence="1">4.1.1.23</ecNumber>
    </recommendedName>
    <alternativeName>
        <fullName evidence="1">OMP decarboxylase</fullName>
        <shortName evidence="1">OMPDCase</shortName>
        <shortName evidence="1">OMPdecase</shortName>
    </alternativeName>
</protein>
<keyword id="KW-0210">Decarboxylase</keyword>
<keyword id="KW-0456">Lyase</keyword>
<keyword id="KW-0665">Pyrimidine biosynthesis</keyword>
<organism>
    <name type="scientific">Xylella fastidiosa (strain M23)</name>
    <dbReference type="NCBI Taxonomy" id="405441"/>
    <lineage>
        <taxon>Bacteria</taxon>
        <taxon>Pseudomonadati</taxon>
        <taxon>Pseudomonadota</taxon>
        <taxon>Gammaproteobacteria</taxon>
        <taxon>Lysobacterales</taxon>
        <taxon>Lysobacteraceae</taxon>
        <taxon>Xylella</taxon>
    </lineage>
</organism>
<evidence type="ECO:0000255" key="1">
    <source>
        <dbReference type="HAMAP-Rule" id="MF_01200"/>
    </source>
</evidence>
<sequence length="244" mass="26506">MMNHTPLLLGIRERLIFALDVPSRTQALEWIDQLGDAISFYKIGMELLASGEYFQVLDDLASRGKRVFVDLKFFDIPATVAGVIRRLSQWPISYCTIHGWHAPMMQAATEANTSNMHLLAVTVLTSMTREDLAKMGINREPVDVVVERALAAHMAGMSGVIASGQEAAAIRHAIGSGFSIVCPGIRTNHVPHNDQQRTIGIKAAFANGADAIVVGRPIRMAQDPQAAAEAMQTEIMTALTEPST</sequence>
<reference key="1">
    <citation type="journal article" date="2010" name="J. Bacteriol.">
        <title>Whole genome sequences of two Xylella fastidiosa strains (M12 and M23) causing almond leaf scorch disease in California.</title>
        <authorList>
            <person name="Chen J."/>
            <person name="Xie G."/>
            <person name="Han S."/>
            <person name="Chertkov O."/>
            <person name="Sims D."/>
            <person name="Civerolo E.L."/>
        </authorList>
    </citation>
    <scope>NUCLEOTIDE SEQUENCE [LARGE SCALE GENOMIC DNA]</scope>
    <source>
        <strain>M23</strain>
    </source>
</reference>
<dbReference type="EC" id="4.1.1.23" evidence="1"/>
<dbReference type="EMBL" id="CP001011">
    <property type="protein sequence ID" value="ACB91483.1"/>
    <property type="molecule type" value="Genomic_DNA"/>
</dbReference>
<dbReference type="SMR" id="B2I656"/>
<dbReference type="KEGG" id="xfn:XfasM23_0025"/>
<dbReference type="HOGENOM" id="CLU_067069_1_0_6"/>
<dbReference type="UniPathway" id="UPA00070">
    <property type="reaction ID" value="UER00120"/>
</dbReference>
<dbReference type="Proteomes" id="UP000001698">
    <property type="component" value="Chromosome"/>
</dbReference>
<dbReference type="GO" id="GO:0005829">
    <property type="term" value="C:cytosol"/>
    <property type="evidence" value="ECO:0007669"/>
    <property type="project" value="TreeGrafter"/>
</dbReference>
<dbReference type="GO" id="GO:0004590">
    <property type="term" value="F:orotidine-5'-phosphate decarboxylase activity"/>
    <property type="evidence" value="ECO:0007669"/>
    <property type="project" value="UniProtKB-UniRule"/>
</dbReference>
<dbReference type="GO" id="GO:0006207">
    <property type="term" value="P:'de novo' pyrimidine nucleobase biosynthetic process"/>
    <property type="evidence" value="ECO:0007669"/>
    <property type="project" value="InterPro"/>
</dbReference>
<dbReference type="GO" id="GO:0044205">
    <property type="term" value="P:'de novo' UMP biosynthetic process"/>
    <property type="evidence" value="ECO:0007669"/>
    <property type="project" value="UniProtKB-UniRule"/>
</dbReference>
<dbReference type="CDD" id="cd04725">
    <property type="entry name" value="OMP_decarboxylase_like"/>
    <property type="match status" value="1"/>
</dbReference>
<dbReference type="Gene3D" id="3.20.20.70">
    <property type="entry name" value="Aldolase class I"/>
    <property type="match status" value="1"/>
</dbReference>
<dbReference type="HAMAP" id="MF_01200_B">
    <property type="entry name" value="OMPdecase_type1_B"/>
    <property type="match status" value="1"/>
</dbReference>
<dbReference type="InterPro" id="IPR013785">
    <property type="entry name" value="Aldolase_TIM"/>
</dbReference>
<dbReference type="InterPro" id="IPR014732">
    <property type="entry name" value="OMPdecase"/>
</dbReference>
<dbReference type="InterPro" id="IPR018089">
    <property type="entry name" value="OMPdecase_AS"/>
</dbReference>
<dbReference type="InterPro" id="IPR047596">
    <property type="entry name" value="OMPdecase_bac"/>
</dbReference>
<dbReference type="InterPro" id="IPR001754">
    <property type="entry name" value="OMPdeCOase_dom"/>
</dbReference>
<dbReference type="InterPro" id="IPR011060">
    <property type="entry name" value="RibuloseP-bd_barrel"/>
</dbReference>
<dbReference type="NCBIfam" id="NF001273">
    <property type="entry name" value="PRK00230.1"/>
    <property type="match status" value="1"/>
</dbReference>
<dbReference type="NCBIfam" id="TIGR01740">
    <property type="entry name" value="pyrF"/>
    <property type="match status" value="1"/>
</dbReference>
<dbReference type="PANTHER" id="PTHR32119">
    <property type="entry name" value="OROTIDINE 5'-PHOSPHATE DECARBOXYLASE"/>
    <property type="match status" value="1"/>
</dbReference>
<dbReference type="PANTHER" id="PTHR32119:SF2">
    <property type="entry name" value="OROTIDINE 5'-PHOSPHATE DECARBOXYLASE"/>
    <property type="match status" value="1"/>
</dbReference>
<dbReference type="Pfam" id="PF00215">
    <property type="entry name" value="OMPdecase"/>
    <property type="match status" value="1"/>
</dbReference>
<dbReference type="SMART" id="SM00934">
    <property type="entry name" value="OMPdecase"/>
    <property type="match status" value="1"/>
</dbReference>
<dbReference type="SUPFAM" id="SSF51366">
    <property type="entry name" value="Ribulose-phoshate binding barrel"/>
    <property type="match status" value="1"/>
</dbReference>
<dbReference type="PROSITE" id="PS00156">
    <property type="entry name" value="OMPDECASE"/>
    <property type="match status" value="1"/>
</dbReference>
<accession>B2I656</accession>